<proteinExistence type="evidence at transcript level"/>
<protein>
    <recommendedName>
        <fullName evidence="5">A-type voltage-gated potassium channel KCND1</fullName>
    </recommendedName>
    <alternativeName>
        <fullName>Potassium voltage-gated channel subfamily D member 1</fullName>
    </alternativeName>
    <alternativeName>
        <fullName>Voltage-gated potassium channel subunit Kv4.1</fullName>
    </alternativeName>
</protein>
<keyword id="KW-1003">Cell membrane</keyword>
<keyword id="KW-0407">Ion channel</keyword>
<keyword id="KW-0406">Ion transport</keyword>
<keyword id="KW-0472">Membrane</keyword>
<keyword id="KW-0479">Metal-binding</keyword>
<keyword id="KW-0597">Phosphoprotein</keyword>
<keyword id="KW-0630">Potassium</keyword>
<keyword id="KW-0631">Potassium channel</keyword>
<keyword id="KW-0633">Potassium transport</keyword>
<keyword id="KW-1185">Reference proteome</keyword>
<keyword id="KW-0812">Transmembrane</keyword>
<keyword id="KW-1133">Transmembrane helix</keyword>
<keyword id="KW-0813">Transport</keyword>
<keyword id="KW-0851">Voltage-gated channel</keyword>
<keyword id="KW-0862">Zinc</keyword>
<feature type="chain" id="PRO_0000054063" description="A-type voltage-gated potassium channel KCND1">
    <location>
        <begin position="1"/>
        <end position="647"/>
    </location>
</feature>
<feature type="topological domain" description="Cytoplasmic" evidence="1">
    <location>
        <begin position="1"/>
        <end position="183"/>
    </location>
</feature>
<feature type="transmembrane region" description="Helical; Name=Segment S1" evidence="1">
    <location>
        <begin position="184"/>
        <end position="205"/>
    </location>
</feature>
<feature type="topological domain" description="Extracellular" evidence="1">
    <location>
        <begin position="206"/>
        <end position="230"/>
    </location>
</feature>
<feature type="transmembrane region" description="Helical; Name=Segment S2" evidence="1">
    <location>
        <begin position="231"/>
        <end position="252"/>
    </location>
</feature>
<feature type="topological domain" description="Cytoplasmic" evidence="1">
    <location>
        <begin position="253"/>
        <end position="263"/>
    </location>
</feature>
<feature type="transmembrane region" description="Helical; Name=Segment S3" evidence="1">
    <location>
        <begin position="264"/>
        <end position="284"/>
    </location>
</feature>
<feature type="topological domain" description="Extracellular" evidence="1">
    <location>
        <begin position="285"/>
        <end position="287"/>
    </location>
</feature>
<feature type="transmembrane region" description="Helical; Voltage-sensor; Name=Segment S4" evidence="1">
    <location>
        <begin position="288"/>
        <end position="308"/>
    </location>
</feature>
<feature type="topological domain" description="Cytoplasmic" evidence="1">
    <location>
        <begin position="309"/>
        <end position="323"/>
    </location>
</feature>
<feature type="transmembrane region" description="Helical; Name=Segment S5" evidence="1">
    <location>
        <begin position="324"/>
        <end position="345"/>
    </location>
</feature>
<feature type="topological domain" description="Extracellular" evidence="1">
    <location>
        <begin position="346"/>
        <end position="359"/>
    </location>
</feature>
<feature type="intramembrane region" description="Helical; Name=Pore helix" evidence="1">
    <location>
        <begin position="360"/>
        <end position="371"/>
    </location>
</feature>
<feature type="intramembrane region" evidence="1">
    <location>
        <begin position="372"/>
        <end position="379"/>
    </location>
</feature>
<feature type="topological domain" description="Extracellular" evidence="1">
    <location>
        <begin position="380"/>
        <end position="386"/>
    </location>
</feature>
<feature type="transmembrane region" description="Helical; Name=Segment S6" evidence="1">
    <location>
        <begin position="387"/>
        <end position="415"/>
    </location>
</feature>
<feature type="topological domain" description="Cytoplasmic" evidence="1">
    <location>
        <begin position="416"/>
        <end position="647"/>
    </location>
</feature>
<feature type="region of interest" description="Interaction with KCNIP1, KCNIP2, and other family members" evidence="4">
    <location>
        <begin position="2"/>
        <end position="20"/>
    </location>
</feature>
<feature type="region of interest" description="Disordered" evidence="7">
    <location>
        <begin position="144"/>
        <end position="164"/>
    </location>
</feature>
<feature type="region of interest" description="S4-S5 linker" evidence="1">
    <location>
        <begin position="310"/>
        <end position="323"/>
    </location>
</feature>
<feature type="region of interest" description="Required for dendritic targeting" evidence="4">
    <location>
        <begin position="474"/>
        <end position="489"/>
    </location>
</feature>
<feature type="region of interest" description="Disordered" evidence="7">
    <location>
        <begin position="510"/>
        <end position="531"/>
    </location>
</feature>
<feature type="region of interest" description="Disordered" evidence="7">
    <location>
        <begin position="564"/>
        <end position="584"/>
    </location>
</feature>
<feature type="region of interest" description="Disordered" evidence="7">
    <location>
        <begin position="601"/>
        <end position="634"/>
    </location>
</feature>
<feature type="short sequence motif" description="Selectivity filter" evidence="4">
    <location>
        <begin position="372"/>
        <end position="377"/>
    </location>
</feature>
<feature type="compositionally biased region" description="Low complexity" evidence="7">
    <location>
        <begin position="510"/>
        <end position="520"/>
    </location>
</feature>
<feature type="compositionally biased region" description="Polar residues" evidence="7">
    <location>
        <begin position="521"/>
        <end position="530"/>
    </location>
</feature>
<feature type="binding site" evidence="4">
    <location>
        <position position="104"/>
    </location>
    <ligand>
        <name>Zn(2+)</name>
        <dbReference type="ChEBI" id="CHEBI:29105"/>
    </ligand>
</feature>
<feature type="binding site" evidence="4">
    <location>
        <position position="131"/>
    </location>
    <ligand>
        <name>Zn(2+)</name>
        <dbReference type="ChEBI" id="CHEBI:29105"/>
    </ligand>
</feature>
<feature type="binding site" evidence="4">
    <location>
        <position position="132"/>
    </location>
    <ligand>
        <name>Zn(2+)</name>
        <dbReference type="ChEBI" id="CHEBI:29105"/>
    </ligand>
</feature>
<feature type="modified residue" description="Phosphoserine" evidence="3">
    <location>
        <position position="555"/>
    </location>
</feature>
<accession>P59994</accession>
<accession>G1TA68</accession>
<organism>
    <name type="scientific">Oryctolagus cuniculus</name>
    <name type="common">Rabbit</name>
    <dbReference type="NCBI Taxonomy" id="9986"/>
    <lineage>
        <taxon>Eukaryota</taxon>
        <taxon>Metazoa</taxon>
        <taxon>Chordata</taxon>
        <taxon>Craniata</taxon>
        <taxon>Vertebrata</taxon>
        <taxon>Euteleostomi</taxon>
        <taxon>Mammalia</taxon>
        <taxon>Eutheria</taxon>
        <taxon>Euarchontoglires</taxon>
        <taxon>Glires</taxon>
        <taxon>Lagomorpha</taxon>
        <taxon>Leporidae</taxon>
        <taxon>Oryctolagus</taxon>
    </lineage>
</organism>
<name>KCND1_RABIT</name>
<gene>
    <name evidence="5" type="primary">KCND1</name>
</gene>
<sequence>MAAGVATWLPFARAAAVGWLPLAQQPLPPAPGVKASRGDEVLVVNVSGRRFETWKNTLDRYPDTLLGSSEKEFFYDADSGEYFFDRDPDMFRHVLNFYRTGRLHCPRQECIQAFDEELAFYGLVPELVGDCCLEEYRDRKKENAQRLAEDEEAEQTGDGPALPAGSSIRQRLWRAFENPHTSTAALVFYYVTGFFIAVSVIANVVETIPCRGPARRPPREQPCGDRFPLAFFCMDTACVLIFTGEYLLRLFAAPSRCRFLRSVMSLIDVVAILPYYIGLLVPKNEDVSGAFVTLRVFRVFRIFKFSRHSQGLRILGYTLKSCASELGFLLFSLTMAIIIFATVMFYAEKGTSKTNFTSIPAAFWYTIVTMTTLGYGDMVPSTIAGKIFGSICSLSGVLVIALPVPVIVSNFSRIYHQNQRADKRRAQQKVRLARIRLAKSGTTNAFLQYKQNGGLEDNGSGEEQALCVRNRSAFEQQHHHLLHCLEKTTCHEFTDELTFSEALGAVSLGGRTSRSTSVSSQPVGPSSLLSSCCPRRAKRRAIRLANSTASVSRGSMQELDTLAGLRRSPGPQSRSSLNAKPHDSLDLNCDSRDFVAAIISIPTPPANTPDESQPSSPGGGGRASSTLRNSRLGTPCLLPETVKISSL</sequence>
<evidence type="ECO:0000250" key="1">
    <source>
        <dbReference type="UniProtKB" id="P63142"/>
    </source>
</evidence>
<evidence type="ECO:0000250" key="2">
    <source>
        <dbReference type="UniProtKB" id="Q03719"/>
    </source>
</evidence>
<evidence type="ECO:0000250" key="3">
    <source>
        <dbReference type="UniProtKB" id="Q62897"/>
    </source>
</evidence>
<evidence type="ECO:0000250" key="4">
    <source>
        <dbReference type="UniProtKB" id="Q63881"/>
    </source>
</evidence>
<evidence type="ECO:0000250" key="5">
    <source>
        <dbReference type="UniProtKB" id="Q9NSA2"/>
    </source>
</evidence>
<evidence type="ECO:0000250" key="6">
    <source>
        <dbReference type="UniProtKB" id="Q9NZV8"/>
    </source>
</evidence>
<evidence type="ECO:0000256" key="7">
    <source>
        <dbReference type="SAM" id="MobiDB-lite"/>
    </source>
</evidence>
<evidence type="ECO:0000269" key="8">
    <source>
    </source>
</evidence>
<evidence type="ECO:0000305" key="9"/>
<dbReference type="EMBL" id="AAGW02040254">
    <property type="status" value="NOT_ANNOTATED_CDS"/>
    <property type="molecule type" value="Genomic_DNA"/>
</dbReference>
<dbReference type="EMBL" id="AF493548">
    <property type="protein sequence ID" value="AAM46842.1"/>
    <property type="molecule type" value="mRNA"/>
</dbReference>
<dbReference type="SMR" id="P59994"/>
<dbReference type="STRING" id="9986.ENSOCUP00000013554"/>
<dbReference type="PaxDb" id="9986-ENSOCUP00000013554"/>
<dbReference type="Ensembl" id="ENSOCUT00000015776.4">
    <property type="protein sequence ID" value="ENSOCUP00000013554.3"/>
    <property type="gene ID" value="ENSOCUG00000015777.4"/>
</dbReference>
<dbReference type="eggNOG" id="KOG4390">
    <property type="taxonomic scope" value="Eukaryota"/>
</dbReference>
<dbReference type="GeneTree" id="ENSGT00940000162057"/>
<dbReference type="HOGENOM" id="CLU_011722_9_1_1"/>
<dbReference type="InParanoid" id="P59994"/>
<dbReference type="TreeFam" id="TF313103"/>
<dbReference type="Proteomes" id="UP000001811">
    <property type="component" value="Chromosome X"/>
</dbReference>
<dbReference type="Bgee" id="ENSOCUG00000015777">
    <property type="expression patterns" value="Expressed in blood and 10 other cell types or tissues"/>
</dbReference>
<dbReference type="GO" id="GO:0043197">
    <property type="term" value="C:dendritic spine"/>
    <property type="evidence" value="ECO:0007669"/>
    <property type="project" value="TreeGrafter"/>
</dbReference>
<dbReference type="GO" id="GO:0043025">
    <property type="term" value="C:neuronal cell body"/>
    <property type="evidence" value="ECO:0007669"/>
    <property type="project" value="TreeGrafter"/>
</dbReference>
<dbReference type="GO" id="GO:0045211">
    <property type="term" value="C:postsynaptic membrane"/>
    <property type="evidence" value="ECO:0007669"/>
    <property type="project" value="TreeGrafter"/>
</dbReference>
<dbReference type="GO" id="GO:0008076">
    <property type="term" value="C:voltage-gated potassium channel complex"/>
    <property type="evidence" value="ECO:0007669"/>
    <property type="project" value="Ensembl"/>
</dbReference>
<dbReference type="GO" id="GO:0005250">
    <property type="term" value="F:A-type (transient outward) potassium channel activity"/>
    <property type="evidence" value="ECO:0007669"/>
    <property type="project" value="Ensembl"/>
</dbReference>
<dbReference type="GO" id="GO:0046872">
    <property type="term" value="F:metal ion binding"/>
    <property type="evidence" value="ECO:0007669"/>
    <property type="project" value="UniProtKB-KW"/>
</dbReference>
<dbReference type="GO" id="GO:0001508">
    <property type="term" value="P:action potential"/>
    <property type="evidence" value="ECO:0007669"/>
    <property type="project" value="TreeGrafter"/>
</dbReference>
<dbReference type="GO" id="GO:0051260">
    <property type="term" value="P:protein homooligomerization"/>
    <property type="evidence" value="ECO:0007669"/>
    <property type="project" value="InterPro"/>
</dbReference>
<dbReference type="FunFam" id="1.20.120.350:FF:000016">
    <property type="entry name" value="Potassium voltage-gated channel subfamily D member 3"/>
    <property type="match status" value="1"/>
</dbReference>
<dbReference type="FunFam" id="3.30.710.10:FF:000004">
    <property type="entry name" value="Potassium voltage-gated channel subfamily D member 3"/>
    <property type="match status" value="1"/>
</dbReference>
<dbReference type="FunFam" id="1.10.287.70:FF:000028">
    <property type="entry name" value="potassium voltage-gated channel subfamily D member 3"/>
    <property type="match status" value="1"/>
</dbReference>
<dbReference type="Gene3D" id="1.10.287.70">
    <property type="match status" value="1"/>
</dbReference>
<dbReference type="Gene3D" id="3.30.710.10">
    <property type="entry name" value="Potassium Channel Kv1.1, Chain A"/>
    <property type="match status" value="1"/>
</dbReference>
<dbReference type="Gene3D" id="1.20.120.350">
    <property type="entry name" value="Voltage-gated potassium channels. Chain C"/>
    <property type="match status" value="1"/>
</dbReference>
<dbReference type="InterPro" id="IPR000210">
    <property type="entry name" value="BTB/POZ_dom"/>
</dbReference>
<dbReference type="InterPro" id="IPR005821">
    <property type="entry name" value="Ion_trans_dom"/>
</dbReference>
<dbReference type="InterPro" id="IPR003968">
    <property type="entry name" value="K_chnl_volt-dep_Kv"/>
</dbReference>
<dbReference type="InterPro" id="IPR003975">
    <property type="entry name" value="K_chnl_volt-dep_Kv4"/>
</dbReference>
<dbReference type="InterPro" id="IPR004054">
    <property type="entry name" value="K_chnl_volt-dep_Kv4.1"/>
</dbReference>
<dbReference type="InterPro" id="IPR024587">
    <property type="entry name" value="K_chnl_volt-dep_Kv4_C"/>
</dbReference>
<dbReference type="InterPro" id="IPR021645">
    <property type="entry name" value="Shal-type_N"/>
</dbReference>
<dbReference type="InterPro" id="IPR011333">
    <property type="entry name" value="SKP1/BTB/POZ_sf"/>
</dbReference>
<dbReference type="InterPro" id="IPR003131">
    <property type="entry name" value="T1-type_BTB"/>
</dbReference>
<dbReference type="InterPro" id="IPR028325">
    <property type="entry name" value="VG_K_chnl"/>
</dbReference>
<dbReference type="InterPro" id="IPR027359">
    <property type="entry name" value="Volt_channel_dom_sf"/>
</dbReference>
<dbReference type="PANTHER" id="PTHR11537:SF174">
    <property type="entry name" value="POTASSIUM VOLTAGE-GATED CHANNEL SUBFAMILY D MEMBER 1"/>
    <property type="match status" value="1"/>
</dbReference>
<dbReference type="PANTHER" id="PTHR11537">
    <property type="entry name" value="VOLTAGE-GATED POTASSIUM CHANNEL"/>
    <property type="match status" value="1"/>
</dbReference>
<dbReference type="Pfam" id="PF02214">
    <property type="entry name" value="BTB_2"/>
    <property type="match status" value="1"/>
</dbReference>
<dbReference type="Pfam" id="PF11879">
    <property type="entry name" value="DUF3399"/>
    <property type="match status" value="1"/>
</dbReference>
<dbReference type="Pfam" id="PF00520">
    <property type="entry name" value="Ion_trans"/>
    <property type="match status" value="1"/>
</dbReference>
<dbReference type="Pfam" id="PF11601">
    <property type="entry name" value="Shal-type"/>
    <property type="match status" value="1"/>
</dbReference>
<dbReference type="PRINTS" id="PR00169">
    <property type="entry name" value="KCHANNEL"/>
</dbReference>
<dbReference type="PRINTS" id="PR01516">
    <property type="entry name" value="KV41CHANNEL"/>
</dbReference>
<dbReference type="PRINTS" id="PR01491">
    <property type="entry name" value="KVCHANNEL"/>
</dbReference>
<dbReference type="PRINTS" id="PR01497">
    <property type="entry name" value="SHALCHANNEL"/>
</dbReference>
<dbReference type="SMART" id="SM00225">
    <property type="entry name" value="BTB"/>
    <property type="match status" value="1"/>
</dbReference>
<dbReference type="SUPFAM" id="SSF54695">
    <property type="entry name" value="POZ domain"/>
    <property type="match status" value="1"/>
</dbReference>
<dbReference type="SUPFAM" id="SSF81324">
    <property type="entry name" value="Voltage-gated potassium channels"/>
    <property type="match status" value="1"/>
</dbReference>
<reference key="1">
    <citation type="journal article" date="2011" name="Nature">
        <title>A high-resolution map of human evolutionary constraint using 29 mammals.</title>
        <authorList>
            <person name="Lindblad-Toh K."/>
            <person name="Garber M."/>
            <person name="Zuk O."/>
            <person name="Lin M.F."/>
            <person name="Parker B.J."/>
            <person name="Washietl S."/>
            <person name="Kheradpour P."/>
            <person name="Ernst J."/>
            <person name="Jordan G."/>
            <person name="Mauceli E."/>
            <person name="Ward L.D."/>
            <person name="Lowe C.B."/>
            <person name="Holloway A.K."/>
            <person name="Clamp M."/>
            <person name="Gnerre S."/>
            <person name="Alfoldi J."/>
            <person name="Beal K."/>
            <person name="Chang J."/>
            <person name="Clawson H."/>
            <person name="Cuff J."/>
            <person name="Di Palma F."/>
            <person name="Fitzgerald S."/>
            <person name="Flicek P."/>
            <person name="Guttman M."/>
            <person name="Hubisz M.J."/>
            <person name="Jaffe D.B."/>
            <person name="Jungreis I."/>
            <person name="Kent W.J."/>
            <person name="Kostka D."/>
            <person name="Lara M."/>
            <person name="Martins A.L."/>
            <person name="Massingham T."/>
            <person name="Moltke I."/>
            <person name="Raney B.J."/>
            <person name="Rasmussen M.D."/>
            <person name="Robinson J."/>
            <person name="Stark A."/>
            <person name="Vilella A.J."/>
            <person name="Wen J."/>
            <person name="Xie X."/>
            <person name="Zody M.C."/>
            <person name="Baldwin J."/>
            <person name="Bloom T."/>
            <person name="Chin C.W."/>
            <person name="Heiman D."/>
            <person name="Nicol R."/>
            <person name="Nusbaum C."/>
            <person name="Young S."/>
            <person name="Wilkinson J."/>
            <person name="Worley K.C."/>
            <person name="Kovar C.L."/>
            <person name="Muzny D.M."/>
            <person name="Gibbs R.A."/>
            <person name="Cree A."/>
            <person name="Dihn H.H."/>
            <person name="Fowler G."/>
            <person name="Jhangiani S."/>
            <person name="Joshi V."/>
            <person name="Lee S."/>
            <person name="Lewis L.R."/>
            <person name="Nazareth L.V."/>
            <person name="Okwuonu G."/>
            <person name="Santibanez J."/>
            <person name="Warren W.C."/>
            <person name="Mardis E.R."/>
            <person name="Weinstock G.M."/>
            <person name="Wilson R.K."/>
            <person name="Delehaunty K."/>
            <person name="Dooling D."/>
            <person name="Fronik C."/>
            <person name="Fulton L."/>
            <person name="Fulton B."/>
            <person name="Graves T."/>
            <person name="Minx P."/>
            <person name="Sodergren E."/>
            <person name="Birney E."/>
            <person name="Margulies E.H."/>
            <person name="Herrero J."/>
            <person name="Green E.D."/>
            <person name="Haussler D."/>
            <person name="Siepel A."/>
            <person name="Goldman N."/>
            <person name="Pollard K.S."/>
            <person name="Pedersen J.S."/>
            <person name="Lander E.S."/>
            <person name="Kellis M."/>
        </authorList>
    </citation>
    <scope>NUCLEOTIDE SEQUENCE [LARGE SCALE GENOMIC DNA]</scope>
    <source>
        <strain>Thorbecke inbred</strain>
    </source>
</reference>
<reference key="2">
    <citation type="journal article" date="2002" name="J. Physiol. (Lond.)">
        <title>Molecular identification of Kv alpha subunits that contribute to the oxygen-sensitive K(+) current of chemoreceptor cells of the rabbit carotid body.</title>
        <authorList>
            <person name="Sanchez D."/>
            <person name="Lopez-Lopez J.R."/>
            <person name="Perez-Garcia M.T."/>
            <person name="Sanz-Alfayate G."/>
            <person name="Obeso A."/>
            <person name="Ganfornina M.D."/>
            <person name="Gonzalez C."/>
        </authorList>
    </citation>
    <scope>NUCLEOTIDE SEQUENCE [MRNA] OF 438-615</scope>
    <scope>TISSUE SPECIFICITY</scope>
</reference>
<comment type="function">
    <text evidence="2 5">A-type voltage-gated potassium channel that mediates transmembrane potassium transport in excitable membranes in the brain. Mediates A-type current I(SA) in suprachiasmatic nucleus (SCN) neurons. Exhibits a low-threshold A-type current with a hyperpolarized steady-state inactivation midpoint and the recovery process was steeply voltage-dependent, with recovery being markedly faster at more negative potentials. May regulates repetitive firing rates in the suprachiasmatic nucleus (SCN) neurons and circadian rhythms in neuronal excitability and behavior. Contributes to the regulation of the circadian rhythm of action potential firing in suprachiasmatic nucleus neurons, which regulates the circadian rhythm of locomotor activity. The regulatory subunit KCNIP1 modulates the kinetics of channel inactivation, increases the current amplitudes and accelerates recovery from inactivation, shifts activation in a depolarizing direction (By similarity). The regulatory subunit DPP10 decreases the voltage sensitivity of the inactivation channel gating (By similarity).</text>
</comment>
<comment type="catalytic activity">
    <reaction evidence="2">
        <text>K(+)(in) = K(+)(out)</text>
        <dbReference type="Rhea" id="RHEA:29463"/>
        <dbReference type="ChEBI" id="CHEBI:29103"/>
    </reaction>
</comment>
<comment type="subunit">
    <text evidence="2">Component of heteromultimeric potassium channels. Identified in potassium channel complexes containing KCND1, KCND2, KCND3, KCNIP1, KCNIP2, KCNIP3, KCNIP4, DPP6 and DPP10.</text>
</comment>
<comment type="subcellular location">
    <subcellularLocation>
        <location evidence="6">Cell membrane</location>
        <topology evidence="6">Multi-pass membrane protein</topology>
    </subcellularLocation>
</comment>
<comment type="tissue specificity">
    <text evidence="8">Detected in carotid body chemoreceptor cells and in frontal cortex.</text>
</comment>
<comment type="domain">
    <text evidence="1">The transmembrane segment S4 functions as a voltage-sensor and is characterized by a series of positively charged amino acids at every third position. Channel opening and closing is effected by a conformation change that affects the position and orientation of the voltage-sensor paddle formed by S3 and S4 within the membrane. A transmembrane electric field that is positive inside would push the positively charged S4 segment outwards, thereby opening the pore, while a field that is negative inside would pull the S4 segment inwards and close the pore. Changes in the position and orientation of S4 are then transmitted to the activation gate formed by the inner helix bundle via the S4-S5 linker region.</text>
</comment>
<comment type="domain">
    <text evidence="4 6">The zinc binding sites in the N-terminal domain are important for tetramerization and assembly of a functional channel complex (By similarity). Most likely, the channel undergoes closed-state inactivation, where a subtle conformation change would render the protein less sensitive to activation (By similarity).</text>
</comment>
<comment type="similarity">
    <text evidence="9">Belongs to the potassium channel family. D (Shal) (TC 1.A.1.2) subfamily. Kv4.1/KCND1 sub-subfamily.</text>
</comment>